<feature type="signal peptide" evidence="2">
    <location>
        <begin position="1"/>
        <end position="22"/>
    </location>
</feature>
<feature type="chain" id="PRO_0000019313" description="GPI-linked NAD(P)(+)--arginine ADP-ribosyltransferase 1">
    <location>
        <begin position="23"/>
        <end position="290"/>
    </location>
</feature>
<feature type="propeptide" id="PRO_0000019314" description="Removed in mature form" evidence="2">
    <location>
        <begin position="291"/>
        <end position="325"/>
    </location>
</feature>
<feature type="domain" description="TR mART core" evidence="3">
    <location>
        <begin position="73"/>
        <end position="268"/>
    </location>
</feature>
<feature type="active site" evidence="3">
    <location>
        <position position="174"/>
    </location>
</feature>
<feature type="active site" evidence="3">
    <location>
        <position position="197"/>
    </location>
</feature>
<feature type="active site" evidence="3">
    <location>
        <position position="235"/>
    </location>
</feature>
<feature type="binding site" evidence="1">
    <location>
        <position position="117"/>
    </location>
    <ligand>
        <name>NAD(+)</name>
        <dbReference type="ChEBI" id="CHEBI:57540"/>
    </ligand>
</feature>
<feature type="binding site" evidence="1">
    <location>
        <position position="174"/>
    </location>
    <ligand>
        <name>NAD(+)</name>
        <dbReference type="ChEBI" id="CHEBI:57540"/>
    </ligand>
</feature>
<feature type="binding site" evidence="1">
    <location>
        <position position="228"/>
    </location>
    <ligand>
        <name>NAD(+)</name>
        <dbReference type="ChEBI" id="CHEBI:57540"/>
    </ligand>
</feature>
<feature type="lipid moiety-binding region" description="GPI-anchor amidated serine" evidence="2">
    <location>
        <position position="290"/>
    </location>
</feature>
<feature type="glycosylation site" description="N-linked (GlcNAc...) asparagine" evidence="2">
    <location>
        <position position="65"/>
    </location>
</feature>
<feature type="glycosylation site" description="N-linked (GlcNAc...) asparagine" evidence="2">
    <location>
        <position position="248"/>
    </location>
</feature>
<feature type="disulfide bond" evidence="1">
    <location>
        <begin position="53"/>
        <end position="272"/>
    </location>
</feature>
<feature type="disulfide bond" evidence="1">
    <location>
        <begin position="169"/>
        <end position="219"/>
    </location>
</feature>
<feature type="sequence conflict" description="In Ref. 2; CAA65094." evidence="4" ref="2">
    <original>P</original>
    <variation>Q</variation>
    <location>
        <position position="43"/>
    </location>
</feature>
<feature type="sequence conflict" description="In Ref. 2; CAA65094." evidence="4" ref="2">
    <original>R</original>
    <variation>L</variation>
    <location>
        <position position="132"/>
    </location>
</feature>
<feature type="sequence conflict" description="In Ref. 2; CAA65094." evidence="4" ref="2">
    <location>
        <begin position="277"/>
        <end position="290"/>
    </location>
</feature>
<accession>Q60935</accession>
<accession>P70688</accession>
<sequence length="325" mass="35898">MKIPAMMSLLLVSVGLRDGVQVQSYSISQLDIFSQETPLDMAPASFDDQYAGCLADMTAALPDLNHSEFQANKVYADGWAQANNQWQERRAWGSVWGSLPPSPPGFRDEHGVALLAYTANSPLHKEFNAAVREAGRSRAHYLHHFSFKTLHFLLTEALQLLRSHRSRGCQQVYRGVHGLRFRPAGPGATVRLGGFASASLKNVAAQQFGEDTFFGIWTCLGAPIRGYSFFPEEEEVLIPPFETFQVINTSRPTQGPARIYLRALGKRSTYNCEYIKEKKCRSGPCWLGSSAPGSISASCSLLLLLLFLVLSALPENPGLQQLTRC</sequence>
<reference key="1">
    <citation type="journal article" date="1996" name="Blood">
        <title>Molecular characterization of a glycosylphosphatidylinositol-linked ADP-ribosyltransferase from lymphocytes.</title>
        <authorList>
            <person name="Okazaki I.J."/>
            <person name="Kim H.-J."/>
            <person name="McElvaney N.G."/>
            <person name="Lesma E."/>
            <person name="Moss J."/>
        </authorList>
    </citation>
    <scope>NUCLEOTIDE SEQUENCE [MRNA]</scope>
    <source>
        <tissue>Lymphoma</tissue>
    </source>
</reference>
<reference key="2">
    <citation type="journal article" date="1996" name="Genomics">
        <title>Assignment of the human and mouse genes for muscle ecto mono (ADPribosyl)transferase to a conserved linkage group on human chromosome 11p15 and mouse chromosome 7.</title>
        <authorList>
            <person name="Koch-Nolte F."/>
            <person name="Kuehl M."/>
            <person name="Haag F."/>
            <person name="Cetkovic-Cvrlje M."/>
            <person name="Leiter E.H."/>
            <person name="Thiele H.-G."/>
        </authorList>
    </citation>
    <scope>NUCLEOTIDE SEQUENCE [GENOMIC DNA]</scope>
    <source>
        <strain>129/Sv</strain>
    </source>
</reference>
<reference key="3">
    <citation type="journal article" date="1997" name="DNA Cell Biol.">
        <title>Molecular cloning of a functional murine arginine-specific mono-ADP-ribosyltransferase and its expression in lymphoid cells.</title>
        <authorList>
            <person name="Yu Y."/>
            <person name="Okamoto S."/>
            <person name="Nemoto E."/>
            <person name="Dennert G."/>
        </authorList>
    </citation>
    <scope>NUCLEOTIDE SEQUENCE [MRNA]</scope>
    <source>
        <strain>BALB/cJ</strain>
    </source>
</reference>
<reference key="4">
    <citation type="journal article" date="2004" name="Genome Res.">
        <title>The status, quality, and expansion of the NIH full-length cDNA project: the Mammalian Gene Collection (MGC).</title>
        <authorList>
            <consortium name="The MGC Project Team"/>
        </authorList>
    </citation>
    <scope>NUCLEOTIDE SEQUENCE [LARGE SCALE MRNA]</scope>
    <source>
        <tissue>Limb</tissue>
    </source>
</reference>
<reference key="5">
    <citation type="journal article" date="2010" name="Cell">
        <title>A tissue-specific atlas of mouse protein phosphorylation and expression.</title>
        <authorList>
            <person name="Huttlin E.L."/>
            <person name="Jedrychowski M.P."/>
            <person name="Elias J.E."/>
            <person name="Goswami T."/>
            <person name="Rad R."/>
            <person name="Beausoleil S.A."/>
            <person name="Villen J."/>
            <person name="Haas W."/>
            <person name="Sowa M.E."/>
            <person name="Gygi S.P."/>
        </authorList>
    </citation>
    <scope>IDENTIFICATION BY MASS SPECTROMETRY [LARGE SCALE ANALYSIS]</scope>
    <source>
        <tissue>Heart</tissue>
    </source>
</reference>
<dbReference type="EC" id="2.4.2.31"/>
<dbReference type="EMBL" id="U31510">
    <property type="protein sequence ID" value="AAB18628.1"/>
    <property type="molecule type" value="mRNA"/>
</dbReference>
<dbReference type="EMBL" id="X95825">
    <property type="protein sequence ID" value="CAA65094.1"/>
    <property type="molecule type" value="Genomic_DNA"/>
</dbReference>
<dbReference type="EMBL" id="X95842">
    <property type="protein sequence ID" value="CAA65099.1"/>
    <property type="molecule type" value="mRNA"/>
</dbReference>
<dbReference type="EMBL" id="BC063760">
    <property type="protein sequence ID" value="AAH63760.1"/>
    <property type="molecule type" value="mRNA"/>
</dbReference>
<dbReference type="CCDS" id="CCDS21526.1"/>
<dbReference type="RefSeq" id="NP_033840.2">
    <property type="nucleotide sequence ID" value="NM_009710.4"/>
</dbReference>
<dbReference type="RefSeq" id="XP_011239959.1">
    <property type="nucleotide sequence ID" value="XM_011241657.3"/>
</dbReference>
<dbReference type="RefSeq" id="XP_036008500.1">
    <property type="nucleotide sequence ID" value="XM_036152607.1"/>
</dbReference>
<dbReference type="SMR" id="Q60935"/>
<dbReference type="FunCoup" id="Q60935">
    <property type="interactions" value="89"/>
</dbReference>
<dbReference type="IntAct" id="Q60935">
    <property type="interactions" value="1"/>
</dbReference>
<dbReference type="STRING" id="10090.ENSMUSP00000033300"/>
<dbReference type="GlyCosmos" id="Q60935">
    <property type="glycosylation" value="2 sites, No reported glycans"/>
</dbReference>
<dbReference type="GlyGen" id="Q60935">
    <property type="glycosylation" value="2 sites"/>
</dbReference>
<dbReference type="iPTMnet" id="Q60935"/>
<dbReference type="PhosphoSitePlus" id="Q60935"/>
<dbReference type="PaxDb" id="10090-ENSMUSP00000033300"/>
<dbReference type="ProteomicsDB" id="287437"/>
<dbReference type="Antibodypedia" id="23357">
    <property type="antibodies" value="212 antibodies from 22 providers"/>
</dbReference>
<dbReference type="DNASU" id="11870"/>
<dbReference type="Ensembl" id="ENSMUST00000033300.4">
    <property type="protein sequence ID" value="ENSMUSP00000033300.3"/>
    <property type="gene ID" value="ENSMUSG00000030996.9"/>
</dbReference>
<dbReference type="Ensembl" id="ENSMUST00000209809.2">
    <property type="protein sequence ID" value="ENSMUSP00000147911.2"/>
    <property type="gene ID" value="ENSMUSG00000030996.9"/>
</dbReference>
<dbReference type="GeneID" id="11870"/>
<dbReference type="KEGG" id="mmu:11870"/>
<dbReference type="UCSC" id="uc009iqu.1">
    <property type="organism name" value="mouse"/>
</dbReference>
<dbReference type="AGR" id="MGI:107511"/>
<dbReference type="CTD" id="417"/>
<dbReference type="MGI" id="MGI:107511">
    <property type="gene designation" value="Art1"/>
</dbReference>
<dbReference type="VEuPathDB" id="HostDB:ENSMUSG00000030996"/>
<dbReference type="eggNOG" id="ENOG502QUE9">
    <property type="taxonomic scope" value="Eukaryota"/>
</dbReference>
<dbReference type="GeneTree" id="ENSGT01030000234601"/>
<dbReference type="HOGENOM" id="CLU_059744_1_0_1"/>
<dbReference type="InParanoid" id="Q60935"/>
<dbReference type="OMA" id="FETFQVV"/>
<dbReference type="OrthoDB" id="423533at2759"/>
<dbReference type="PhylomeDB" id="Q60935"/>
<dbReference type="TreeFam" id="TF335356"/>
<dbReference type="BRENDA" id="2.4.2.31">
    <property type="organism ID" value="3474"/>
</dbReference>
<dbReference type="Reactome" id="R-MMU-1462054">
    <property type="pathway name" value="Alpha-defensins"/>
</dbReference>
<dbReference type="BioGRID-ORCS" id="11870">
    <property type="hits" value="1 hit in 77 CRISPR screens"/>
</dbReference>
<dbReference type="ChiTaRS" id="Art1">
    <property type="organism name" value="mouse"/>
</dbReference>
<dbReference type="PRO" id="PR:Q60935"/>
<dbReference type="Proteomes" id="UP000000589">
    <property type="component" value="Chromosome 7"/>
</dbReference>
<dbReference type="RNAct" id="Q60935">
    <property type="molecule type" value="protein"/>
</dbReference>
<dbReference type="Bgee" id="ENSMUSG00000030996">
    <property type="expression patterns" value="Expressed in temporalis muscle and 135 other cell types or tissues"/>
</dbReference>
<dbReference type="ExpressionAtlas" id="Q60935">
    <property type="expression patterns" value="baseline and differential"/>
</dbReference>
<dbReference type="GO" id="GO:0009986">
    <property type="term" value="C:cell surface"/>
    <property type="evidence" value="ECO:0000314"/>
    <property type="project" value="MGI"/>
</dbReference>
<dbReference type="GO" id="GO:0016020">
    <property type="term" value="C:membrane"/>
    <property type="evidence" value="ECO:0000314"/>
    <property type="project" value="MGI"/>
</dbReference>
<dbReference type="GO" id="GO:0033017">
    <property type="term" value="C:sarcoplasmic reticulum membrane"/>
    <property type="evidence" value="ECO:0007669"/>
    <property type="project" value="UniProtKB-SubCell"/>
</dbReference>
<dbReference type="GO" id="GO:0098552">
    <property type="term" value="C:side of membrane"/>
    <property type="evidence" value="ECO:0007669"/>
    <property type="project" value="UniProtKB-KW"/>
</dbReference>
<dbReference type="GO" id="GO:0003950">
    <property type="term" value="F:NAD+ poly-ADP-ribosyltransferase activity"/>
    <property type="evidence" value="ECO:0000314"/>
    <property type="project" value="MGI"/>
</dbReference>
<dbReference type="GO" id="GO:0106274">
    <property type="term" value="F:NAD+-protein-arginine ADP-ribosyltransferase activity"/>
    <property type="evidence" value="ECO:0007669"/>
    <property type="project" value="UniProtKB-EC"/>
</dbReference>
<dbReference type="GO" id="GO:0016779">
    <property type="term" value="F:nucleotidyltransferase activity"/>
    <property type="evidence" value="ECO:0007669"/>
    <property type="project" value="UniProtKB-KW"/>
</dbReference>
<dbReference type="FunFam" id="3.90.176.10:FF:000001">
    <property type="entry name" value="NAD(P)(+)--arginine ADP-ribosyltransferase"/>
    <property type="match status" value="1"/>
</dbReference>
<dbReference type="Gene3D" id="3.90.176.10">
    <property type="entry name" value="Toxin ADP-ribosyltransferase, Chain A, domain 1"/>
    <property type="match status" value="1"/>
</dbReference>
<dbReference type="InterPro" id="IPR050999">
    <property type="entry name" value="ADP-ribosyltransferase_ARG"/>
</dbReference>
<dbReference type="InterPro" id="IPR000768">
    <property type="entry name" value="ART"/>
</dbReference>
<dbReference type="PANTHER" id="PTHR10339">
    <property type="entry name" value="ADP-RIBOSYLTRANSFERASE"/>
    <property type="match status" value="1"/>
</dbReference>
<dbReference type="PANTHER" id="PTHR10339:SF19">
    <property type="entry name" value="GPI-LINKED NAD(P)(+)--ARGININE ADP-RIBOSYLTRANSFERASE 1"/>
    <property type="match status" value="1"/>
</dbReference>
<dbReference type="Pfam" id="PF01129">
    <property type="entry name" value="ART"/>
    <property type="match status" value="1"/>
</dbReference>
<dbReference type="PRINTS" id="PR00970">
    <property type="entry name" value="RIBTRNSFRASE"/>
</dbReference>
<dbReference type="SUPFAM" id="SSF56399">
    <property type="entry name" value="ADP-ribosylation"/>
    <property type="match status" value="1"/>
</dbReference>
<dbReference type="PROSITE" id="PS01291">
    <property type="entry name" value="ART"/>
    <property type="match status" value="1"/>
</dbReference>
<dbReference type="PROSITE" id="PS51996">
    <property type="entry name" value="TR_MART"/>
    <property type="match status" value="1"/>
</dbReference>
<organism>
    <name type="scientific">Mus musculus</name>
    <name type="common">Mouse</name>
    <dbReference type="NCBI Taxonomy" id="10090"/>
    <lineage>
        <taxon>Eukaryota</taxon>
        <taxon>Metazoa</taxon>
        <taxon>Chordata</taxon>
        <taxon>Craniata</taxon>
        <taxon>Vertebrata</taxon>
        <taxon>Euteleostomi</taxon>
        <taxon>Mammalia</taxon>
        <taxon>Eutheria</taxon>
        <taxon>Euarchontoglires</taxon>
        <taxon>Glires</taxon>
        <taxon>Rodentia</taxon>
        <taxon>Myomorpha</taxon>
        <taxon>Muroidea</taxon>
        <taxon>Muridae</taxon>
        <taxon>Murinae</taxon>
        <taxon>Mus</taxon>
        <taxon>Mus</taxon>
    </lineage>
</organism>
<name>NAR1_MOUSE</name>
<proteinExistence type="evidence at protein level"/>
<protein>
    <recommendedName>
        <fullName>GPI-linked NAD(P)(+)--arginine ADP-ribosyltransferase 1</fullName>
        <ecNumber>2.4.2.31</ecNumber>
    </recommendedName>
    <alternativeName>
        <fullName>ADP-ribosyltransferase C2 and C3 toxin-like 1</fullName>
        <shortName>ARTC1</shortName>
    </alternativeName>
    <alternativeName>
        <fullName>Mono(ADP-ribosyl)transferase 1</fullName>
    </alternativeName>
    <alternativeName>
        <fullName>YAC-1</fullName>
    </alternativeName>
    <cdAntigenName>CD296</cdAntigenName>
</protein>
<gene>
    <name type="primary">Art1</name>
    <name type="synonym">Art2</name>
</gene>
<keyword id="KW-1015">Disulfide bond</keyword>
<keyword id="KW-0325">Glycoprotein</keyword>
<keyword id="KW-0328">Glycosyltransferase</keyword>
<keyword id="KW-0336">GPI-anchor</keyword>
<keyword id="KW-0449">Lipoprotein</keyword>
<keyword id="KW-0472">Membrane</keyword>
<keyword id="KW-0520">NAD</keyword>
<keyword id="KW-0521">NADP</keyword>
<keyword id="KW-0548">Nucleotidyltransferase</keyword>
<keyword id="KW-1185">Reference proteome</keyword>
<keyword id="KW-0703">Sarcoplasmic reticulum</keyword>
<keyword id="KW-0732">Signal</keyword>
<keyword id="KW-0808">Transferase</keyword>
<evidence type="ECO:0000250" key="1"/>
<evidence type="ECO:0000255" key="2"/>
<evidence type="ECO:0000255" key="3">
    <source>
        <dbReference type="PROSITE-ProRule" id="PRU01340"/>
    </source>
</evidence>
<evidence type="ECO:0000305" key="4"/>
<comment type="function">
    <text evidence="1">Has ADP-ribosyltransferase activity toward GLP1R.</text>
</comment>
<comment type="catalytic activity">
    <reaction>
        <text>L-arginyl-[protein] + NAD(+) = N(omega)-(ADP-D-ribosyl)-L-arginyl-[protein] + nicotinamide + H(+)</text>
        <dbReference type="Rhea" id="RHEA:19149"/>
        <dbReference type="Rhea" id="RHEA-COMP:10532"/>
        <dbReference type="Rhea" id="RHEA-COMP:15087"/>
        <dbReference type="ChEBI" id="CHEBI:15378"/>
        <dbReference type="ChEBI" id="CHEBI:17154"/>
        <dbReference type="ChEBI" id="CHEBI:29965"/>
        <dbReference type="ChEBI" id="CHEBI:57540"/>
        <dbReference type="ChEBI" id="CHEBI:142554"/>
        <dbReference type="EC" id="2.4.2.31"/>
    </reaction>
</comment>
<comment type="subcellular location">
    <subcellularLocation>
        <location>Sarcoplasmic reticulum membrane</location>
        <topology>Lipid-anchor</topology>
        <topology>GPI-anchor</topology>
    </subcellularLocation>
</comment>
<comment type="tissue specificity">
    <text>Abundantly expressed in cardiac and skeletal muscle. Low levels also found in lung.</text>
</comment>
<comment type="similarity">
    <text evidence="4">Belongs to the Arg-specific ADP-ribosyltransferase family.</text>
</comment>